<protein>
    <recommendedName>
        <fullName evidence="1">RNA pyrophosphohydrolase</fullName>
        <ecNumber evidence="1">3.6.1.-</ecNumber>
    </recommendedName>
    <alternativeName>
        <fullName evidence="1">(Di)nucleoside polyphosphate hydrolase</fullName>
    </alternativeName>
</protein>
<reference key="1">
    <citation type="journal article" date="2003" name="Nat. Genet.">
        <title>Comparative analysis of the genome sequences of Bordetella pertussis, Bordetella parapertussis and Bordetella bronchiseptica.</title>
        <authorList>
            <person name="Parkhill J."/>
            <person name="Sebaihia M."/>
            <person name="Preston A."/>
            <person name="Murphy L.D."/>
            <person name="Thomson N.R."/>
            <person name="Harris D.E."/>
            <person name="Holden M.T.G."/>
            <person name="Churcher C.M."/>
            <person name="Bentley S.D."/>
            <person name="Mungall K.L."/>
            <person name="Cerdeno-Tarraga A.-M."/>
            <person name="Temple L."/>
            <person name="James K.D."/>
            <person name="Harris B."/>
            <person name="Quail M.A."/>
            <person name="Achtman M."/>
            <person name="Atkin R."/>
            <person name="Baker S."/>
            <person name="Basham D."/>
            <person name="Bason N."/>
            <person name="Cherevach I."/>
            <person name="Chillingworth T."/>
            <person name="Collins M."/>
            <person name="Cronin A."/>
            <person name="Davis P."/>
            <person name="Doggett J."/>
            <person name="Feltwell T."/>
            <person name="Goble A."/>
            <person name="Hamlin N."/>
            <person name="Hauser H."/>
            <person name="Holroyd S."/>
            <person name="Jagels K."/>
            <person name="Leather S."/>
            <person name="Moule S."/>
            <person name="Norberczak H."/>
            <person name="O'Neil S."/>
            <person name="Ormond D."/>
            <person name="Price C."/>
            <person name="Rabbinowitsch E."/>
            <person name="Rutter S."/>
            <person name="Sanders M."/>
            <person name="Saunders D."/>
            <person name="Seeger K."/>
            <person name="Sharp S."/>
            <person name="Simmonds M."/>
            <person name="Skelton J."/>
            <person name="Squares R."/>
            <person name="Squares S."/>
            <person name="Stevens K."/>
            <person name="Unwin L."/>
            <person name="Whitehead S."/>
            <person name="Barrell B.G."/>
            <person name="Maskell D.J."/>
        </authorList>
    </citation>
    <scope>NUCLEOTIDE SEQUENCE [LARGE SCALE GENOMIC DNA]</scope>
    <source>
        <strain>Tohama I / ATCC BAA-589 / NCTC 13251</strain>
    </source>
</reference>
<evidence type="ECO:0000255" key="1">
    <source>
        <dbReference type="HAMAP-Rule" id="MF_00298"/>
    </source>
</evidence>
<evidence type="ECO:0000256" key="2">
    <source>
        <dbReference type="SAM" id="MobiDB-lite"/>
    </source>
</evidence>
<name>RPPH_BORPE</name>
<sequence length="190" mass="22678">MLDREGYRPNVGIILVNGKNEVFWGKRIREHAWQFPQGGIKYGESPVQAMYRELHEEVGLKPEHVRILGRTRDWLRYNVPDHFVRREWRGHYKGQKQIWFLLRLVGRDSDVCLRATQHPEFDAWRWSQYWVPLDAVIEFKRDVYTQALNELAVILFRRHHETRYLRQRVHGPRSTDSPSSETDGHAHIAG</sequence>
<dbReference type="EC" id="3.6.1.-" evidence="1"/>
<dbReference type="EMBL" id="BX640421">
    <property type="protein sequence ID" value="CAE43614.1"/>
    <property type="molecule type" value="Genomic_DNA"/>
</dbReference>
<dbReference type="RefSeq" id="NP_881882.1">
    <property type="nucleotide sequence ID" value="NC_002929.2"/>
</dbReference>
<dbReference type="RefSeq" id="WP_003814635.1">
    <property type="nucleotide sequence ID" value="NZ_CP039022.1"/>
</dbReference>
<dbReference type="SMR" id="Q7VTZ7"/>
<dbReference type="STRING" id="257313.BP3349"/>
<dbReference type="PaxDb" id="257313-BP3349"/>
<dbReference type="KEGG" id="bpe:BP3349"/>
<dbReference type="PATRIC" id="fig|257313.5.peg.3629"/>
<dbReference type="eggNOG" id="COG0494">
    <property type="taxonomic scope" value="Bacteria"/>
</dbReference>
<dbReference type="HOGENOM" id="CLU_087195_3_1_4"/>
<dbReference type="Proteomes" id="UP000002676">
    <property type="component" value="Chromosome"/>
</dbReference>
<dbReference type="GO" id="GO:0016462">
    <property type="term" value="F:pyrophosphatase activity"/>
    <property type="evidence" value="ECO:0007669"/>
    <property type="project" value="UniProtKB-ARBA"/>
</dbReference>
<dbReference type="CDD" id="cd03671">
    <property type="entry name" value="NUDIX_Ap4A_hydrolase_plant_like"/>
    <property type="match status" value="1"/>
</dbReference>
<dbReference type="FunFam" id="3.90.79.10:FF:000001">
    <property type="entry name" value="RNA pyrophosphohydrolase"/>
    <property type="match status" value="1"/>
</dbReference>
<dbReference type="Gene3D" id="3.90.79.10">
    <property type="entry name" value="Nucleoside Triphosphate Pyrophosphohydrolase"/>
    <property type="match status" value="1"/>
</dbReference>
<dbReference type="HAMAP" id="MF_00298">
    <property type="entry name" value="Nudix_RppH"/>
    <property type="match status" value="1"/>
</dbReference>
<dbReference type="InterPro" id="IPR020476">
    <property type="entry name" value="Nudix_hydrolase"/>
</dbReference>
<dbReference type="InterPro" id="IPR015797">
    <property type="entry name" value="NUDIX_hydrolase-like_dom_sf"/>
</dbReference>
<dbReference type="InterPro" id="IPR020084">
    <property type="entry name" value="NUDIX_hydrolase_CS"/>
</dbReference>
<dbReference type="InterPro" id="IPR000086">
    <property type="entry name" value="NUDIX_hydrolase_dom"/>
</dbReference>
<dbReference type="InterPro" id="IPR022927">
    <property type="entry name" value="RppH"/>
</dbReference>
<dbReference type="NCBIfam" id="NF001935">
    <property type="entry name" value="PRK00714.1-2"/>
    <property type="match status" value="1"/>
</dbReference>
<dbReference type="NCBIfam" id="NF001937">
    <property type="entry name" value="PRK00714.1-4"/>
    <property type="match status" value="1"/>
</dbReference>
<dbReference type="NCBIfam" id="NF001938">
    <property type="entry name" value="PRK00714.1-5"/>
    <property type="match status" value="1"/>
</dbReference>
<dbReference type="PANTHER" id="PTHR43736">
    <property type="entry name" value="ADP-RIBOSE PYROPHOSPHATASE"/>
    <property type="match status" value="1"/>
</dbReference>
<dbReference type="PANTHER" id="PTHR43736:SF1">
    <property type="entry name" value="DIHYDRONEOPTERIN TRIPHOSPHATE DIPHOSPHATASE"/>
    <property type="match status" value="1"/>
</dbReference>
<dbReference type="Pfam" id="PF00293">
    <property type="entry name" value="NUDIX"/>
    <property type="match status" value="1"/>
</dbReference>
<dbReference type="PRINTS" id="PR00502">
    <property type="entry name" value="NUDIXFAMILY"/>
</dbReference>
<dbReference type="SUPFAM" id="SSF55811">
    <property type="entry name" value="Nudix"/>
    <property type="match status" value="1"/>
</dbReference>
<dbReference type="PROSITE" id="PS51462">
    <property type="entry name" value="NUDIX"/>
    <property type="match status" value="1"/>
</dbReference>
<dbReference type="PROSITE" id="PS00893">
    <property type="entry name" value="NUDIX_BOX"/>
    <property type="match status" value="1"/>
</dbReference>
<keyword id="KW-0378">Hydrolase</keyword>
<keyword id="KW-1185">Reference proteome</keyword>
<feature type="chain" id="PRO_0000056996" description="RNA pyrophosphohydrolase">
    <location>
        <begin position="1"/>
        <end position="190"/>
    </location>
</feature>
<feature type="domain" description="Nudix hydrolase" evidence="1">
    <location>
        <begin position="6"/>
        <end position="149"/>
    </location>
</feature>
<feature type="region of interest" description="Disordered" evidence="2">
    <location>
        <begin position="167"/>
        <end position="190"/>
    </location>
</feature>
<feature type="short sequence motif" description="Nudix box">
    <location>
        <begin position="38"/>
        <end position="59"/>
    </location>
</feature>
<proteinExistence type="inferred from homology"/>
<comment type="function">
    <text evidence="1">Accelerates the degradation of transcripts by removing pyrophosphate from the 5'-end of triphosphorylated RNA, leading to a more labile monophosphorylated state that can stimulate subsequent ribonuclease cleavage.</text>
</comment>
<comment type="cofactor">
    <cofactor evidence="1">
        <name>a divalent metal cation</name>
        <dbReference type="ChEBI" id="CHEBI:60240"/>
    </cofactor>
</comment>
<comment type="similarity">
    <text evidence="1">Belongs to the Nudix hydrolase family. RppH subfamily.</text>
</comment>
<accession>Q7VTZ7</accession>
<organism>
    <name type="scientific">Bordetella pertussis (strain Tohama I / ATCC BAA-589 / NCTC 13251)</name>
    <dbReference type="NCBI Taxonomy" id="257313"/>
    <lineage>
        <taxon>Bacteria</taxon>
        <taxon>Pseudomonadati</taxon>
        <taxon>Pseudomonadota</taxon>
        <taxon>Betaproteobacteria</taxon>
        <taxon>Burkholderiales</taxon>
        <taxon>Alcaligenaceae</taxon>
        <taxon>Bordetella</taxon>
    </lineage>
</organism>
<gene>
    <name evidence="1" type="primary">rppH</name>
    <name evidence="1" type="synonym">nudH</name>
    <name type="ordered locus">BP3349</name>
</gene>